<organism>
    <name type="scientific">Prochlorococcus marinus (strain MIT 9313)</name>
    <dbReference type="NCBI Taxonomy" id="74547"/>
    <lineage>
        <taxon>Bacteria</taxon>
        <taxon>Bacillati</taxon>
        <taxon>Cyanobacteriota</taxon>
        <taxon>Cyanophyceae</taxon>
        <taxon>Synechococcales</taxon>
        <taxon>Prochlorococcaceae</taxon>
        <taxon>Prochlorococcus</taxon>
    </lineage>
</organism>
<protein>
    <recommendedName>
        <fullName evidence="1">NAD(P)H-quinone oxidoreductase subunit M</fullName>
        <ecNumber evidence="1">7.1.1.-</ecNumber>
    </recommendedName>
    <alternativeName>
        <fullName evidence="1">NAD(P)H dehydrogenase I subunit M</fullName>
        <shortName evidence="1">NDH-1 subunit M</shortName>
        <shortName evidence="1">NDH-M</shortName>
    </alternativeName>
</protein>
<name>NDHM_PROMM</name>
<proteinExistence type="inferred from homology"/>
<accession>Q7V4E7</accession>
<comment type="function">
    <text evidence="1">NDH-1 shuttles electrons from an unknown electron donor, via FMN and iron-sulfur (Fe-S) centers, to quinones in the respiratory and/or the photosynthetic chain. The immediate electron acceptor for the enzyme in this species is believed to be plastoquinone. Couples the redox reaction to proton translocation, and thus conserves the redox energy in a proton gradient. Cyanobacterial NDH-1 also plays a role in inorganic carbon-concentration.</text>
</comment>
<comment type="catalytic activity">
    <reaction evidence="1">
        <text>a plastoquinone + NADH + (n+1) H(+)(in) = a plastoquinol + NAD(+) + n H(+)(out)</text>
        <dbReference type="Rhea" id="RHEA:42608"/>
        <dbReference type="Rhea" id="RHEA-COMP:9561"/>
        <dbReference type="Rhea" id="RHEA-COMP:9562"/>
        <dbReference type="ChEBI" id="CHEBI:15378"/>
        <dbReference type="ChEBI" id="CHEBI:17757"/>
        <dbReference type="ChEBI" id="CHEBI:57540"/>
        <dbReference type="ChEBI" id="CHEBI:57945"/>
        <dbReference type="ChEBI" id="CHEBI:62192"/>
    </reaction>
</comment>
<comment type="catalytic activity">
    <reaction evidence="1">
        <text>a plastoquinone + NADPH + (n+1) H(+)(in) = a plastoquinol + NADP(+) + n H(+)(out)</text>
        <dbReference type="Rhea" id="RHEA:42612"/>
        <dbReference type="Rhea" id="RHEA-COMP:9561"/>
        <dbReference type="Rhea" id="RHEA-COMP:9562"/>
        <dbReference type="ChEBI" id="CHEBI:15378"/>
        <dbReference type="ChEBI" id="CHEBI:17757"/>
        <dbReference type="ChEBI" id="CHEBI:57783"/>
        <dbReference type="ChEBI" id="CHEBI:58349"/>
        <dbReference type="ChEBI" id="CHEBI:62192"/>
    </reaction>
</comment>
<comment type="subunit">
    <text evidence="1">NDH-1 can be composed of about 15 different subunits; different subcomplexes with different compositions have been identified which probably have different functions.</text>
</comment>
<comment type="subcellular location">
    <subcellularLocation>
        <location evidence="1">Cellular thylakoid membrane</location>
        <topology evidence="1">Peripheral membrane protein</topology>
        <orientation evidence="1">Cytoplasmic side</orientation>
    </subcellularLocation>
</comment>
<comment type="similarity">
    <text evidence="1">Belongs to the complex I NdhM subunit family.</text>
</comment>
<sequence length="115" mass="13130">MNETLLKCTTRHVRIFTARVENNDLVPDPNQLTLDLDPDNEFLWTESVTKEIQQRFAELVASHAGGELSDYNLRRIGSELEGTIRKLLQAGKLSYNPECRVLNYSMGLPRTPELL</sequence>
<feature type="chain" id="PRO_0000352192" description="NAD(P)H-quinone oxidoreductase subunit M">
    <location>
        <begin position="1"/>
        <end position="115"/>
    </location>
</feature>
<gene>
    <name evidence="1" type="primary">ndhM</name>
    <name type="ordered locus">PMT_2005</name>
</gene>
<evidence type="ECO:0000255" key="1">
    <source>
        <dbReference type="HAMAP-Rule" id="MF_01352"/>
    </source>
</evidence>
<dbReference type="EC" id="7.1.1.-" evidence="1"/>
<dbReference type="EMBL" id="BX548175">
    <property type="protein sequence ID" value="CAE22179.1"/>
    <property type="molecule type" value="Genomic_DNA"/>
</dbReference>
<dbReference type="RefSeq" id="WP_011131370.1">
    <property type="nucleotide sequence ID" value="NC_005071.1"/>
</dbReference>
<dbReference type="SMR" id="Q7V4E7"/>
<dbReference type="DNASU" id="1728705"/>
<dbReference type="KEGG" id="pmt:PMT_2005"/>
<dbReference type="eggNOG" id="ENOG5031AQM">
    <property type="taxonomic scope" value="Bacteria"/>
</dbReference>
<dbReference type="HOGENOM" id="CLU_137431_0_0_3"/>
<dbReference type="OrthoDB" id="461686at2"/>
<dbReference type="Proteomes" id="UP000001423">
    <property type="component" value="Chromosome"/>
</dbReference>
<dbReference type="GO" id="GO:0031676">
    <property type="term" value="C:plasma membrane-derived thylakoid membrane"/>
    <property type="evidence" value="ECO:0007669"/>
    <property type="project" value="UniProtKB-SubCell"/>
</dbReference>
<dbReference type="GO" id="GO:0016655">
    <property type="term" value="F:oxidoreductase activity, acting on NAD(P)H, quinone or similar compound as acceptor"/>
    <property type="evidence" value="ECO:0007669"/>
    <property type="project" value="UniProtKB-UniRule"/>
</dbReference>
<dbReference type="GO" id="GO:0048038">
    <property type="term" value="F:quinone binding"/>
    <property type="evidence" value="ECO:0007669"/>
    <property type="project" value="UniProtKB-KW"/>
</dbReference>
<dbReference type="HAMAP" id="MF_01352">
    <property type="entry name" value="NDH1_NDH1M"/>
    <property type="match status" value="1"/>
</dbReference>
<dbReference type="InterPro" id="IPR018922">
    <property type="entry name" value="NdhM"/>
</dbReference>
<dbReference type="PANTHER" id="PTHR36900">
    <property type="entry name" value="NAD(P)H-QUINONE OXIDOREDUCTASE SUBUNIT M, CHLOROPLASTIC"/>
    <property type="match status" value="1"/>
</dbReference>
<dbReference type="PANTHER" id="PTHR36900:SF1">
    <property type="entry name" value="NAD(P)H-QUINONE OXIDOREDUCTASE SUBUNIT M, CHLOROPLASTIC"/>
    <property type="match status" value="1"/>
</dbReference>
<dbReference type="Pfam" id="PF10664">
    <property type="entry name" value="NdhM"/>
    <property type="match status" value="1"/>
</dbReference>
<reference key="1">
    <citation type="journal article" date="2003" name="Nature">
        <title>Genome divergence in two Prochlorococcus ecotypes reflects oceanic niche differentiation.</title>
        <authorList>
            <person name="Rocap G."/>
            <person name="Larimer F.W."/>
            <person name="Lamerdin J.E."/>
            <person name="Malfatti S."/>
            <person name="Chain P."/>
            <person name="Ahlgren N.A."/>
            <person name="Arellano A."/>
            <person name="Coleman M."/>
            <person name="Hauser L."/>
            <person name="Hess W.R."/>
            <person name="Johnson Z.I."/>
            <person name="Land M.L."/>
            <person name="Lindell D."/>
            <person name="Post A.F."/>
            <person name="Regala W."/>
            <person name="Shah M."/>
            <person name="Shaw S.L."/>
            <person name="Steglich C."/>
            <person name="Sullivan M.B."/>
            <person name="Ting C.S."/>
            <person name="Tolonen A."/>
            <person name="Webb E.A."/>
            <person name="Zinser E.R."/>
            <person name="Chisholm S.W."/>
        </authorList>
    </citation>
    <scope>NUCLEOTIDE SEQUENCE [LARGE SCALE GENOMIC DNA]</scope>
    <source>
        <strain>MIT 9313</strain>
    </source>
</reference>
<keyword id="KW-0472">Membrane</keyword>
<keyword id="KW-0520">NAD</keyword>
<keyword id="KW-0521">NADP</keyword>
<keyword id="KW-0618">Plastoquinone</keyword>
<keyword id="KW-0874">Quinone</keyword>
<keyword id="KW-1185">Reference proteome</keyword>
<keyword id="KW-0793">Thylakoid</keyword>
<keyword id="KW-1278">Translocase</keyword>
<keyword id="KW-0813">Transport</keyword>